<keyword id="KW-1003">Cell membrane</keyword>
<keyword id="KW-0210">Decarboxylase</keyword>
<keyword id="KW-0456">Lyase</keyword>
<keyword id="KW-0472">Membrane</keyword>
<keyword id="KW-1185">Reference proteome</keyword>
<keyword id="KW-0831">Ubiquinone biosynthesis</keyword>
<feature type="chain" id="PRO_0000267705" description="3-octaprenyl-4-hydroxybenzoate carboxy-lyase">
    <location>
        <begin position="1"/>
        <end position="614"/>
    </location>
</feature>
<feature type="region of interest" description="Unknown insert">
    <location>
        <begin position="460"/>
        <end position="584"/>
    </location>
</feature>
<sequence length="614" mass="69037">MQYKDLRDFIGHLEDIGQLKRISHPIDPHYEMTEISDRTLRAGGPALLFENPIGYDIPVLTNLFGTPERVAIGMGRKDVLELREVGKLLAYLKEPEPPKGFKDALDKLPVFKQVLNMPTKNIRKAACQQIVWQGDDVDLDKVPVMSCWADDVAPLLTWGLTITKGPHKKRQNLGIYRQQKLSKNKVIMRWLAHRGGALDLRDWMETHPGEPFPVSVAFGADPATILGAVTPVPDTLSEYAFAGLLRGSRTEITKSISNDLEVPASAEIVLEGYIDPTEFADEGPYGDHTGYYNEVEKHHVFTVTHITMRKEPIYHSTYTGRPPDEPAVLGVALNEVFVPILQKQFPEIIDFYLPPEGCSYRMAVVTMKKQYPGHAKRVMMGVWSFLRQFMYTKFVLVCDEEVNARDWSQVTAAMSQHMDPARDSLMIENTPIDSLDFASPVVGLGSKMGLDITKKWEVELALSPNVECSLTSSEQIEGCIAEITKMCPEIIEIHLQNDNANMVVVSINKQAAGNAKKIMDAIWAQFEENKFVIVCDDDVNVSDWNDIIWAVTTRMDPARDTLFLQSVGETSKMGLDATNKWEGECLREWGTPIKKDPEVVAKIDSIWDELGIFK</sequence>
<organism>
    <name type="scientific">Aliivibrio fischeri (strain ATCC 700601 / ES114)</name>
    <name type="common">Vibrio fischeri</name>
    <dbReference type="NCBI Taxonomy" id="312309"/>
    <lineage>
        <taxon>Bacteria</taxon>
        <taxon>Pseudomonadati</taxon>
        <taxon>Pseudomonadota</taxon>
        <taxon>Gammaproteobacteria</taxon>
        <taxon>Vibrionales</taxon>
        <taxon>Vibrionaceae</taxon>
        <taxon>Aliivibrio</taxon>
    </lineage>
</organism>
<proteinExistence type="inferred from homology"/>
<dbReference type="EC" id="4.1.1.-"/>
<dbReference type="EMBL" id="CP000020">
    <property type="protein sequence ID" value="AAW84555.1"/>
    <property type="molecule type" value="Genomic_DNA"/>
</dbReference>
<dbReference type="RefSeq" id="WP_011260934.1">
    <property type="nucleotide sequence ID" value="NC_006840.2"/>
</dbReference>
<dbReference type="RefSeq" id="YP_203443.1">
    <property type="nucleotide sequence ID" value="NC_006840.2"/>
</dbReference>
<dbReference type="SMR" id="Q5E8U1"/>
<dbReference type="STRING" id="312309.VF_0060"/>
<dbReference type="EnsemblBacteria" id="AAW84555">
    <property type="protein sequence ID" value="AAW84555"/>
    <property type="gene ID" value="VF_0060"/>
</dbReference>
<dbReference type="GeneID" id="54162688"/>
<dbReference type="KEGG" id="vfi:VF_0060"/>
<dbReference type="PATRIC" id="fig|312309.11.peg.60"/>
<dbReference type="eggNOG" id="COG0043">
    <property type="taxonomic scope" value="Bacteria"/>
</dbReference>
<dbReference type="HOGENOM" id="CLU_023348_4_0_6"/>
<dbReference type="OrthoDB" id="9809841at2"/>
<dbReference type="UniPathway" id="UPA00232"/>
<dbReference type="Proteomes" id="UP000000537">
    <property type="component" value="Chromosome I"/>
</dbReference>
<dbReference type="GO" id="GO:0005829">
    <property type="term" value="C:cytosol"/>
    <property type="evidence" value="ECO:0007669"/>
    <property type="project" value="TreeGrafter"/>
</dbReference>
<dbReference type="GO" id="GO:0005886">
    <property type="term" value="C:plasma membrane"/>
    <property type="evidence" value="ECO:0007669"/>
    <property type="project" value="UniProtKB-SubCell"/>
</dbReference>
<dbReference type="GO" id="GO:0008694">
    <property type="term" value="F:3-octaprenyl-4-hydroxybenzoate carboxy-lyase activity"/>
    <property type="evidence" value="ECO:0007669"/>
    <property type="project" value="TreeGrafter"/>
</dbReference>
<dbReference type="GO" id="GO:0006744">
    <property type="term" value="P:ubiquinone biosynthetic process"/>
    <property type="evidence" value="ECO:0007669"/>
    <property type="project" value="UniProtKB-UniPathway"/>
</dbReference>
<dbReference type="FunFam" id="1.20.5.570:FF:000001">
    <property type="entry name" value="3-octaprenyl-4-hydroxybenzoate carboxy-lyase"/>
    <property type="match status" value="1"/>
</dbReference>
<dbReference type="FunFam" id="3.40.1670.10:FF:000001">
    <property type="entry name" value="3-octaprenyl-4-hydroxybenzoate carboxy-lyase"/>
    <property type="match status" value="1"/>
</dbReference>
<dbReference type="Gene3D" id="1.20.5.570">
    <property type="entry name" value="Single helix bin"/>
    <property type="match status" value="1"/>
</dbReference>
<dbReference type="Gene3D" id="3.40.1670.10">
    <property type="entry name" value="UbiD C-terminal domain-like"/>
    <property type="match status" value="2"/>
</dbReference>
<dbReference type="InterPro" id="IPR002830">
    <property type="entry name" value="UbiD"/>
</dbReference>
<dbReference type="InterPro" id="IPR049381">
    <property type="entry name" value="UbiD-like_C"/>
</dbReference>
<dbReference type="InterPro" id="IPR049383">
    <property type="entry name" value="UbiD-like_N"/>
</dbReference>
<dbReference type="InterPro" id="IPR048304">
    <property type="entry name" value="UbiD_Rift_dom"/>
</dbReference>
<dbReference type="NCBIfam" id="NF008175">
    <property type="entry name" value="PRK10922.1"/>
    <property type="match status" value="1"/>
</dbReference>
<dbReference type="NCBIfam" id="TIGR00148">
    <property type="entry name" value="UbiD family decarboxylase"/>
    <property type="match status" value="1"/>
</dbReference>
<dbReference type="PANTHER" id="PTHR30108">
    <property type="entry name" value="3-OCTAPRENYL-4-HYDROXYBENZOATE CARBOXY-LYASE-RELATED"/>
    <property type="match status" value="1"/>
</dbReference>
<dbReference type="PANTHER" id="PTHR30108:SF17">
    <property type="entry name" value="FERULIC ACID DECARBOXYLASE 1"/>
    <property type="match status" value="1"/>
</dbReference>
<dbReference type="Pfam" id="PF01977">
    <property type="entry name" value="UbiD"/>
    <property type="match status" value="1"/>
</dbReference>
<dbReference type="Pfam" id="PF20696">
    <property type="entry name" value="UbiD_C"/>
    <property type="match status" value="2"/>
</dbReference>
<dbReference type="Pfam" id="PF20695">
    <property type="entry name" value="UbiD_N"/>
    <property type="match status" value="1"/>
</dbReference>
<dbReference type="SUPFAM" id="SSF50475">
    <property type="entry name" value="FMN-binding split barrel"/>
    <property type="match status" value="1"/>
</dbReference>
<dbReference type="SUPFAM" id="SSF143968">
    <property type="entry name" value="UbiD C-terminal domain-like"/>
    <property type="match status" value="2"/>
</dbReference>
<reference key="1">
    <citation type="journal article" date="2005" name="Proc. Natl. Acad. Sci. U.S.A.">
        <title>Complete genome sequence of Vibrio fischeri: a symbiotic bacterium with pathogenic congeners.</title>
        <authorList>
            <person name="Ruby E.G."/>
            <person name="Urbanowski M."/>
            <person name="Campbell J."/>
            <person name="Dunn A."/>
            <person name="Faini M."/>
            <person name="Gunsalus R."/>
            <person name="Lostroh P."/>
            <person name="Lupp C."/>
            <person name="McCann J."/>
            <person name="Millikan D."/>
            <person name="Schaefer A."/>
            <person name="Stabb E."/>
            <person name="Stevens A."/>
            <person name="Visick K."/>
            <person name="Whistler C."/>
            <person name="Greenberg E.P."/>
        </authorList>
    </citation>
    <scope>NUCLEOTIDE SEQUENCE [LARGE SCALE GENOMIC DNA]</scope>
    <source>
        <strain>ATCC 700601 / ES114</strain>
    </source>
</reference>
<evidence type="ECO:0000250" key="1"/>
<evidence type="ECO:0000305" key="2"/>
<protein>
    <recommendedName>
        <fullName>3-octaprenyl-4-hydroxybenzoate carboxy-lyase</fullName>
        <ecNumber>4.1.1.-</ecNumber>
    </recommendedName>
    <alternativeName>
        <fullName>Polyprenyl p-hydroxybenzoate decarboxylase</fullName>
    </alternativeName>
</protein>
<comment type="function">
    <text evidence="1">Catalyzes the decarboxylation of 3-octaprenyl-4-hydroxy benzoate to 2-octaprenylphenol.</text>
</comment>
<comment type="cofactor">
    <cofactor evidence="1">
        <name>a divalent metal cation</name>
        <dbReference type="ChEBI" id="CHEBI:60240"/>
    </cofactor>
</comment>
<comment type="pathway">
    <text>Cofactor biosynthesis; ubiquinone biosynthesis.</text>
</comment>
<comment type="subunit">
    <text evidence="1">Homohexamer.</text>
</comment>
<comment type="subcellular location">
    <subcellularLocation>
        <location evidence="1">Cell membrane</location>
        <topology evidence="1">Peripheral membrane protein</topology>
    </subcellularLocation>
</comment>
<comment type="similarity">
    <text evidence="2">Belongs to the UbiD family.</text>
</comment>
<name>UBID_ALIF1</name>
<gene>
    <name type="primary">ubiD</name>
    <name type="ordered locus">VF_0060</name>
</gene>
<accession>Q5E8U1</accession>